<evidence type="ECO:0000303" key="1">
    <source>
    </source>
</evidence>
<evidence type="ECO:0000305" key="2"/>
<comment type="alternative products">
    <event type="alternative splicing"/>
    <isoform>
        <id>Q9LXX3-1</id>
        <name>1</name>
        <sequence type="displayed"/>
    </isoform>
    <isoform>
        <id>Q9LXX3-2</id>
        <name>2</name>
        <sequence type="described" ref="VSP_039572"/>
    </isoform>
</comment>
<name>FB328_ARATH</name>
<sequence length="233" mass="26708">MMTRGRKENSNETSPSPTLLLHGGVIDIPLNTDSGVTKNTPGEIALLRFKSVSKLWSSIISSRRDFIESIVTRFLTQPPHDAHFIFGFDSGPYVECFLGLSSTYPPNTDIEAVLSIPGRMAQYVYGLMCCLSGFKDAKKETQGWSRIFFHEMHGFSNWRILGATCGGEILFAKWMYCIYHYEDKLLCVLYYEPKRNSMRGVDVEGTLPNDTRRYRFVIIWTIPDHVQNTMYLY</sequence>
<feature type="chain" id="PRO_0000396043" description="Probable F-box protein At3g56670">
    <location>
        <begin position="1"/>
        <end position="233"/>
    </location>
</feature>
<feature type="domain" description="F-box">
    <location>
        <begin position="22"/>
        <end position="69"/>
    </location>
</feature>
<feature type="splice variant" id="VSP_039572" description="In isoform 2." evidence="1">
    <original>MMTRGRKENSNETSPSPTLLLHGGVIDIPLNTDSGVTKNTPGEIALLRFKSVSKLWSSIISSRRDFIESIVTRFLTQPPHDAHFIFGFDSGPYVECFLGLSSTYPPNTDIEAVLSIPGRMAQYVYGLMCCLSGF</original>
    <variation>MEYIWVM</variation>
    <location>
        <begin position="1"/>
        <end position="134"/>
    </location>
</feature>
<feature type="sequence conflict" description="In Ref. 3; EG492417." evidence="2" ref="3">
    <original>I</original>
    <variation>V</variation>
    <location>
        <position position="178"/>
    </location>
</feature>
<reference key="1">
    <citation type="journal article" date="2000" name="Nature">
        <title>Sequence and analysis of chromosome 3 of the plant Arabidopsis thaliana.</title>
        <authorList>
            <person name="Salanoubat M."/>
            <person name="Lemcke K."/>
            <person name="Rieger M."/>
            <person name="Ansorge W."/>
            <person name="Unseld M."/>
            <person name="Fartmann B."/>
            <person name="Valle G."/>
            <person name="Bloecker H."/>
            <person name="Perez-Alonso M."/>
            <person name="Obermaier B."/>
            <person name="Delseny M."/>
            <person name="Boutry M."/>
            <person name="Grivell L.A."/>
            <person name="Mache R."/>
            <person name="Puigdomenech P."/>
            <person name="De Simone V."/>
            <person name="Choisne N."/>
            <person name="Artiguenave F."/>
            <person name="Robert C."/>
            <person name="Brottier P."/>
            <person name="Wincker P."/>
            <person name="Cattolico L."/>
            <person name="Weissenbach J."/>
            <person name="Saurin W."/>
            <person name="Quetier F."/>
            <person name="Schaefer M."/>
            <person name="Mueller-Auer S."/>
            <person name="Gabel C."/>
            <person name="Fuchs M."/>
            <person name="Benes V."/>
            <person name="Wurmbach E."/>
            <person name="Drzonek H."/>
            <person name="Erfle H."/>
            <person name="Jordan N."/>
            <person name="Bangert S."/>
            <person name="Wiedelmann R."/>
            <person name="Kranz H."/>
            <person name="Voss H."/>
            <person name="Holland R."/>
            <person name="Brandt P."/>
            <person name="Nyakatura G."/>
            <person name="Vezzi A."/>
            <person name="D'Angelo M."/>
            <person name="Pallavicini A."/>
            <person name="Toppo S."/>
            <person name="Simionati B."/>
            <person name="Conrad A."/>
            <person name="Hornischer K."/>
            <person name="Kauer G."/>
            <person name="Loehnert T.-H."/>
            <person name="Nordsiek G."/>
            <person name="Reichelt J."/>
            <person name="Scharfe M."/>
            <person name="Schoen O."/>
            <person name="Bargues M."/>
            <person name="Terol J."/>
            <person name="Climent J."/>
            <person name="Navarro P."/>
            <person name="Collado C."/>
            <person name="Perez-Perez A."/>
            <person name="Ottenwaelder B."/>
            <person name="Duchemin D."/>
            <person name="Cooke R."/>
            <person name="Laudie M."/>
            <person name="Berger-Llauro C."/>
            <person name="Purnelle B."/>
            <person name="Masuy D."/>
            <person name="de Haan M."/>
            <person name="Maarse A.C."/>
            <person name="Alcaraz J.-P."/>
            <person name="Cottet A."/>
            <person name="Casacuberta E."/>
            <person name="Monfort A."/>
            <person name="Argiriou A."/>
            <person name="Flores M."/>
            <person name="Liguori R."/>
            <person name="Vitale D."/>
            <person name="Mannhaupt G."/>
            <person name="Haase D."/>
            <person name="Schoof H."/>
            <person name="Rudd S."/>
            <person name="Zaccaria P."/>
            <person name="Mewes H.-W."/>
            <person name="Mayer K.F.X."/>
            <person name="Kaul S."/>
            <person name="Town C.D."/>
            <person name="Koo H.L."/>
            <person name="Tallon L.J."/>
            <person name="Jenkins J."/>
            <person name="Rooney T."/>
            <person name="Rizzo M."/>
            <person name="Walts A."/>
            <person name="Utterback T."/>
            <person name="Fujii C.Y."/>
            <person name="Shea T.P."/>
            <person name="Creasy T.H."/>
            <person name="Haas B."/>
            <person name="Maiti R."/>
            <person name="Wu D."/>
            <person name="Peterson J."/>
            <person name="Van Aken S."/>
            <person name="Pai G."/>
            <person name="Militscher J."/>
            <person name="Sellers P."/>
            <person name="Gill J.E."/>
            <person name="Feldblyum T.V."/>
            <person name="Preuss D."/>
            <person name="Lin X."/>
            <person name="Nierman W.C."/>
            <person name="Salzberg S.L."/>
            <person name="White O."/>
            <person name="Venter J.C."/>
            <person name="Fraser C.M."/>
            <person name="Kaneko T."/>
            <person name="Nakamura Y."/>
            <person name="Sato S."/>
            <person name="Kato T."/>
            <person name="Asamizu E."/>
            <person name="Sasamoto S."/>
            <person name="Kimura T."/>
            <person name="Idesawa K."/>
            <person name="Kawashima K."/>
            <person name="Kishida Y."/>
            <person name="Kiyokawa C."/>
            <person name="Kohara M."/>
            <person name="Matsumoto M."/>
            <person name="Matsuno A."/>
            <person name="Muraki A."/>
            <person name="Nakayama S."/>
            <person name="Nakazaki N."/>
            <person name="Shinpo S."/>
            <person name="Takeuchi C."/>
            <person name="Wada T."/>
            <person name="Watanabe A."/>
            <person name="Yamada M."/>
            <person name="Yasuda M."/>
            <person name="Tabata S."/>
        </authorList>
    </citation>
    <scope>NUCLEOTIDE SEQUENCE [LARGE SCALE GENOMIC DNA]</scope>
    <source>
        <strain>cv. Columbia</strain>
    </source>
</reference>
<reference key="2">
    <citation type="journal article" date="2017" name="Plant J.">
        <title>Araport11: a complete reannotation of the Arabidopsis thaliana reference genome.</title>
        <authorList>
            <person name="Cheng C.Y."/>
            <person name="Krishnakumar V."/>
            <person name="Chan A.P."/>
            <person name="Thibaud-Nissen F."/>
            <person name="Schobel S."/>
            <person name="Town C.D."/>
        </authorList>
    </citation>
    <scope>GENOME REANNOTATION</scope>
    <source>
        <strain>cv. Columbia</strain>
    </source>
</reference>
<reference key="3">
    <citation type="journal article" date="2005" name="Plant Physiol.">
        <title>Analysis of the cDNAs of hypothetical genes on Arabidopsis chromosome 2 reveals numerous transcript variants.</title>
        <authorList>
            <person name="Xiao Y.-L."/>
            <person name="Smith S.R."/>
            <person name="Ishmael N."/>
            <person name="Redman J.C."/>
            <person name="Kumar N."/>
            <person name="Monaghan E.L."/>
            <person name="Ayele M."/>
            <person name="Haas B.J."/>
            <person name="Wu H.C."/>
            <person name="Town C.D."/>
        </authorList>
    </citation>
    <scope>NUCLEOTIDE SEQUENCE [LARGE SCALE MRNA] (ISOFORM 2)</scope>
    <source>
        <strain>cv. Columbia</strain>
    </source>
</reference>
<protein>
    <recommendedName>
        <fullName>Probable F-box protein At3g56670</fullName>
    </recommendedName>
</protein>
<keyword id="KW-0025">Alternative splicing</keyword>
<keyword id="KW-1185">Reference proteome</keyword>
<organism>
    <name type="scientific">Arabidopsis thaliana</name>
    <name type="common">Mouse-ear cress</name>
    <dbReference type="NCBI Taxonomy" id="3702"/>
    <lineage>
        <taxon>Eukaryota</taxon>
        <taxon>Viridiplantae</taxon>
        <taxon>Streptophyta</taxon>
        <taxon>Embryophyta</taxon>
        <taxon>Tracheophyta</taxon>
        <taxon>Spermatophyta</taxon>
        <taxon>Magnoliopsida</taxon>
        <taxon>eudicotyledons</taxon>
        <taxon>Gunneridae</taxon>
        <taxon>Pentapetalae</taxon>
        <taxon>rosids</taxon>
        <taxon>malvids</taxon>
        <taxon>Brassicales</taxon>
        <taxon>Brassicaceae</taxon>
        <taxon>Camelineae</taxon>
        <taxon>Arabidopsis</taxon>
    </lineage>
</organism>
<proteinExistence type="evidence at transcript level"/>
<accession>Q9LXX3</accession>
<dbReference type="EMBL" id="AL163972">
    <property type="protein sequence ID" value="CAB88070.1"/>
    <property type="molecule type" value="Genomic_DNA"/>
</dbReference>
<dbReference type="EMBL" id="CP002686">
    <property type="protein sequence ID" value="AEE79550.1"/>
    <property type="molecule type" value="Genomic_DNA"/>
</dbReference>
<dbReference type="EMBL" id="EG492417">
    <property type="status" value="NOT_ANNOTATED_CDS"/>
    <property type="molecule type" value="mRNA"/>
</dbReference>
<dbReference type="PIR" id="T49068">
    <property type="entry name" value="T49068"/>
</dbReference>
<dbReference type="RefSeq" id="NP_191226.1">
    <molecule id="Q9LXX3-1"/>
    <property type="nucleotide sequence ID" value="NM_115526.1"/>
</dbReference>
<dbReference type="iPTMnet" id="Q9LXX3"/>
<dbReference type="PaxDb" id="3702-AT3G56670.1"/>
<dbReference type="EnsemblPlants" id="AT3G56670.1">
    <molecule id="Q9LXX3-1"/>
    <property type="protein sequence ID" value="AT3G56670.1"/>
    <property type="gene ID" value="AT3G56670"/>
</dbReference>
<dbReference type="GeneID" id="824834"/>
<dbReference type="Gramene" id="AT3G56670.1">
    <molecule id="Q9LXX3-1"/>
    <property type="protein sequence ID" value="AT3G56670.1"/>
    <property type="gene ID" value="AT3G56670"/>
</dbReference>
<dbReference type="KEGG" id="ath:AT3G56670"/>
<dbReference type="Araport" id="AT3G56670"/>
<dbReference type="TAIR" id="AT3G56670"/>
<dbReference type="HOGENOM" id="CLU_1191304_0_0_1"/>
<dbReference type="InParanoid" id="Q9LXX3"/>
<dbReference type="OMA" id="GPYVECF"/>
<dbReference type="PhylomeDB" id="Q9LXX3"/>
<dbReference type="PRO" id="PR:Q9LXX3"/>
<dbReference type="Proteomes" id="UP000006548">
    <property type="component" value="Chromosome 3"/>
</dbReference>
<dbReference type="ExpressionAtlas" id="Q9LXX3">
    <property type="expression patterns" value="differential"/>
</dbReference>
<dbReference type="PANTHER" id="PTHR31111">
    <property type="entry name" value="BNAA05G37150D PROTEIN-RELATED"/>
    <property type="match status" value="1"/>
</dbReference>
<dbReference type="PANTHER" id="PTHR31111:SF58">
    <property type="entry name" value="F-BOX DOMAIN-CONTAINING PROTEIN"/>
    <property type="match status" value="1"/>
</dbReference>
<gene>
    <name type="ordered locus">At3g56670</name>
    <name type="ORF">T5P19.320</name>
</gene>